<name>YGFB_ECOLU</name>
<dbReference type="EMBL" id="CU928163">
    <property type="protein sequence ID" value="CAR14414.1"/>
    <property type="molecule type" value="Genomic_DNA"/>
</dbReference>
<dbReference type="RefSeq" id="WP_001295378.1">
    <property type="nucleotide sequence ID" value="NC_011751.1"/>
</dbReference>
<dbReference type="RefSeq" id="YP_002413933.1">
    <property type="nucleotide sequence ID" value="NC_011751.1"/>
</dbReference>
<dbReference type="SMR" id="B7N7F2"/>
<dbReference type="STRING" id="585056.ECUMN_3251"/>
<dbReference type="GeneID" id="93779092"/>
<dbReference type="KEGG" id="eum:ECUMN_3251"/>
<dbReference type="PATRIC" id="fig|585056.7.peg.3428"/>
<dbReference type="HOGENOM" id="CLU_085336_1_0_6"/>
<dbReference type="Proteomes" id="UP000007097">
    <property type="component" value="Chromosome"/>
</dbReference>
<dbReference type="GO" id="GO:0005829">
    <property type="term" value="C:cytosol"/>
    <property type="evidence" value="ECO:0007669"/>
    <property type="project" value="TreeGrafter"/>
</dbReference>
<dbReference type="FunFam" id="1.20.120.740:FF:000001">
    <property type="entry name" value="UPF0149 protein YgfB"/>
    <property type="match status" value="1"/>
</dbReference>
<dbReference type="Gene3D" id="1.20.120.740">
    <property type="entry name" value="YgfB uncharacterised protein family UPF0149, PF03695"/>
    <property type="match status" value="1"/>
</dbReference>
<dbReference type="HAMAP" id="MF_00346">
    <property type="entry name" value="UPF0149"/>
    <property type="match status" value="1"/>
</dbReference>
<dbReference type="InterPro" id="IPR011978">
    <property type="entry name" value="YgfB-like"/>
</dbReference>
<dbReference type="InterPro" id="IPR036255">
    <property type="entry name" value="YgfB-like_sf"/>
</dbReference>
<dbReference type="NCBIfam" id="NF002477">
    <property type="entry name" value="PRK01736.1"/>
    <property type="match status" value="1"/>
</dbReference>
<dbReference type="NCBIfam" id="TIGR02292">
    <property type="entry name" value="ygfB_yecA"/>
    <property type="match status" value="1"/>
</dbReference>
<dbReference type="PANTHER" id="PTHR37528">
    <property type="entry name" value="UPF0149 PROTEIN YGFB"/>
    <property type="match status" value="1"/>
</dbReference>
<dbReference type="PANTHER" id="PTHR37528:SF1">
    <property type="entry name" value="UPF0149 PROTEIN YGFB"/>
    <property type="match status" value="1"/>
</dbReference>
<dbReference type="Pfam" id="PF03695">
    <property type="entry name" value="UPF0149"/>
    <property type="match status" value="1"/>
</dbReference>
<dbReference type="SUPFAM" id="SSF101327">
    <property type="entry name" value="YgfB-like"/>
    <property type="match status" value="1"/>
</dbReference>
<feature type="chain" id="PRO_1000120471" description="UPF0149 protein YgfB">
    <location>
        <begin position="1"/>
        <end position="192"/>
    </location>
</feature>
<organism>
    <name type="scientific">Escherichia coli O17:K52:H18 (strain UMN026 / ExPEC)</name>
    <dbReference type="NCBI Taxonomy" id="585056"/>
    <lineage>
        <taxon>Bacteria</taxon>
        <taxon>Pseudomonadati</taxon>
        <taxon>Pseudomonadota</taxon>
        <taxon>Gammaproteobacteria</taxon>
        <taxon>Enterobacterales</taxon>
        <taxon>Enterobacteriaceae</taxon>
        <taxon>Escherichia</taxon>
    </lineage>
</organism>
<gene>
    <name evidence="1" type="primary">ygfB</name>
    <name type="ordered locus">ECUMN_3251</name>
</gene>
<protein>
    <recommendedName>
        <fullName evidence="1">UPF0149 protein YgfB</fullName>
    </recommendedName>
</protein>
<sequence length="192" mass="21230">MSIQNEMPGYNEMNQYLNQQGTGLTPAEMHGLISGMICGGNDDSSWLPLLHDLTNEGMAFGHELAQALRKMHSATSDALQDDGFLFQLYLPDGDDVSVFDRADALAGWVNHFLLGLGVTQPKLDKVTGETGEAIDDLRNIAQLGYDEDEDQEELEMSLEEIIEYVRVAALLCHDTFTHPQPTAPEVQKPTLH</sequence>
<evidence type="ECO:0000255" key="1">
    <source>
        <dbReference type="HAMAP-Rule" id="MF_00346"/>
    </source>
</evidence>
<reference key="1">
    <citation type="journal article" date="2009" name="PLoS Genet.">
        <title>Organised genome dynamics in the Escherichia coli species results in highly diverse adaptive paths.</title>
        <authorList>
            <person name="Touchon M."/>
            <person name="Hoede C."/>
            <person name="Tenaillon O."/>
            <person name="Barbe V."/>
            <person name="Baeriswyl S."/>
            <person name="Bidet P."/>
            <person name="Bingen E."/>
            <person name="Bonacorsi S."/>
            <person name="Bouchier C."/>
            <person name="Bouvet O."/>
            <person name="Calteau A."/>
            <person name="Chiapello H."/>
            <person name="Clermont O."/>
            <person name="Cruveiller S."/>
            <person name="Danchin A."/>
            <person name="Diard M."/>
            <person name="Dossat C."/>
            <person name="Karoui M.E."/>
            <person name="Frapy E."/>
            <person name="Garry L."/>
            <person name="Ghigo J.M."/>
            <person name="Gilles A.M."/>
            <person name="Johnson J."/>
            <person name="Le Bouguenec C."/>
            <person name="Lescat M."/>
            <person name="Mangenot S."/>
            <person name="Martinez-Jehanne V."/>
            <person name="Matic I."/>
            <person name="Nassif X."/>
            <person name="Oztas S."/>
            <person name="Petit M.A."/>
            <person name="Pichon C."/>
            <person name="Rouy Z."/>
            <person name="Ruf C.S."/>
            <person name="Schneider D."/>
            <person name="Tourret J."/>
            <person name="Vacherie B."/>
            <person name="Vallenet D."/>
            <person name="Medigue C."/>
            <person name="Rocha E.P.C."/>
            <person name="Denamur E."/>
        </authorList>
    </citation>
    <scope>NUCLEOTIDE SEQUENCE [LARGE SCALE GENOMIC DNA]</scope>
    <source>
        <strain>UMN026 / ExPEC</strain>
    </source>
</reference>
<comment type="similarity">
    <text evidence="1">Belongs to the UPF0149 family.</text>
</comment>
<proteinExistence type="inferred from homology"/>
<accession>B7N7F2</accession>